<sequence>MQLNPAEISDLIKAKIENLSVNAEVRTRGTVISVTDGIVRIHGLSDAMQGEMLEFPGNTFGLAMNLERDSVGAVVLGEHEHIKEGDTVTCTGRILEVPVGRELVGRVVDALGRPIDGKGPINTTLTAPIEKIAPGVIARKSVDQPMQTGLKAIDSMVPVGRGQRELIIGDRQTGKTAVALDAIVNQKGTGVICIYVAIGQKASSIANVVRKLEEHGAMEHTIVVAATASEAAALQYIAPYSGCTMGEFFRDRGEDALIVYDDLSKQAVAYRQISLLLRRPPGREAYPGDVFYLHSRLLERAARVNEHEVEKLTNGEVKGKTGSLTALPIIETQAGDVSAFVPTNVISITDGQIFLETDLFNAGIRPAINAGISVSRVGGAAQTKVIKKLGGGIRLALAQYRELAAFSQFASDLDEATRKQLEHGEVVTELMKQKQFSTLNTAEMALTLWAINNGSYSDVPVAKALAFESEFLSFVRTQHPEVLEAVNASGAMSDESEKTLEAAMKSFKSSYAYQA</sequence>
<accession>Q9JW72</accession>
<accession>A1IPX3</accession>
<evidence type="ECO:0000255" key="1">
    <source>
        <dbReference type="HAMAP-Rule" id="MF_01346"/>
    </source>
</evidence>
<feature type="chain" id="PRO_0000238300" description="ATP synthase subunit alpha">
    <location>
        <begin position="1"/>
        <end position="515"/>
    </location>
</feature>
<feature type="binding site" evidence="1">
    <location>
        <begin position="169"/>
        <end position="176"/>
    </location>
    <ligand>
        <name>ATP</name>
        <dbReference type="ChEBI" id="CHEBI:30616"/>
    </ligand>
</feature>
<feature type="site" description="Required for activity" evidence="1">
    <location>
        <position position="373"/>
    </location>
</feature>
<dbReference type="EC" id="7.1.2.2" evidence="1"/>
<dbReference type="EMBL" id="AL157959">
    <property type="protein sequence ID" value="CAM07794.1"/>
    <property type="molecule type" value="Genomic_DNA"/>
</dbReference>
<dbReference type="PIR" id="A81970">
    <property type="entry name" value="A81970"/>
</dbReference>
<dbReference type="RefSeq" id="WP_002246458.1">
    <property type="nucleotide sequence ID" value="NC_003116.1"/>
</dbReference>
<dbReference type="SMR" id="Q9JW72"/>
<dbReference type="EnsemblBacteria" id="CAM07794">
    <property type="protein sequence ID" value="CAM07794"/>
    <property type="gene ID" value="NMA0517"/>
</dbReference>
<dbReference type="GeneID" id="93386842"/>
<dbReference type="KEGG" id="nma:NMA0517"/>
<dbReference type="HOGENOM" id="CLU_010091_2_1_4"/>
<dbReference type="Proteomes" id="UP000000626">
    <property type="component" value="Chromosome"/>
</dbReference>
<dbReference type="GO" id="GO:0005886">
    <property type="term" value="C:plasma membrane"/>
    <property type="evidence" value="ECO:0007669"/>
    <property type="project" value="UniProtKB-SubCell"/>
</dbReference>
<dbReference type="GO" id="GO:0045259">
    <property type="term" value="C:proton-transporting ATP synthase complex"/>
    <property type="evidence" value="ECO:0007669"/>
    <property type="project" value="UniProtKB-KW"/>
</dbReference>
<dbReference type="GO" id="GO:0043531">
    <property type="term" value="F:ADP binding"/>
    <property type="evidence" value="ECO:0007669"/>
    <property type="project" value="TreeGrafter"/>
</dbReference>
<dbReference type="GO" id="GO:0005524">
    <property type="term" value="F:ATP binding"/>
    <property type="evidence" value="ECO:0007669"/>
    <property type="project" value="UniProtKB-UniRule"/>
</dbReference>
<dbReference type="GO" id="GO:0046933">
    <property type="term" value="F:proton-transporting ATP synthase activity, rotational mechanism"/>
    <property type="evidence" value="ECO:0007669"/>
    <property type="project" value="UniProtKB-UniRule"/>
</dbReference>
<dbReference type="CDD" id="cd18113">
    <property type="entry name" value="ATP-synt_F1_alpha_C"/>
    <property type="match status" value="1"/>
</dbReference>
<dbReference type="CDD" id="cd18116">
    <property type="entry name" value="ATP-synt_F1_alpha_N"/>
    <property type="match status" value="1"/>
</dbReference>
<dbReference type="CDD" id="cd01132">
    <property type="entry name" value="F1-ATPase_alpha_CD"/>
    <property type="match status" value="1"/>
</dbReference>
<dbReference type="FunFam" id="1.20.150.20:FF:000001">
    <property type="entry name" value="ATP synthase subunit alpha"/>
    <property type="match status" value="1"/>
</dbReference>
<dbReference type="FunFam" id="2.40.30.20:FF:000001">
    <property type="entry name" value="ATP synthase subunit alpha"/>
    <property type="match status" value="1"/>
</dbReference>
<dbReference type="FunFam" id="3.40.50.300:FF:000002">
    <property type="entry name" value="ATP synthase subunit alpha"/>
    <property type="match status" value="1"/>
</dbReference>
<dbReference type="Gene3D" id="2.40.30.20">
    <property type="match status" value="1"/>
</dbReference>
<dbReference type="Gene3D" id="1.20.150.20">
    <property type="entry name" value="ATP synthase alpha/beta chain, C-terminal domain"/>
    <property type="match status" value="1"/>
</dbReference>
<dbReference type="Gene3D" id="3.40.50.300">
    <property type="entry name" value="P-loop containing nucleotide triphosphate hydrolases"/>
    <property type="match status" value="1"/>
</dbReference>
<dbReference type="HAMAP" id="MF_01346">
    <property type="entry name" value="ATP_synth_alpha_bact"/>
    <property type="match status" value="1"/>
</dbReference>
<dbReference type="InterPro" id="IPR023366">
    <property type="entry name" value="ATP_synth_asu-like_sf"/>
</dbReference>
<dbReference type="InterPro" id="IPR000793">
    <property type="entry name" value="ATP_synth_asu_C"/>
</dbReference>
<dbReference type="InterPro" id="IPR038376">
    <property type="entry name" value="ATP_synth_asu_C_sf"/>
</dbReference>
<dbReference type="InterPro" id="IPR033732">
    <property type="entry name" value="ATP_synth_F1_a_nt-bd_dom"/>
</dbReference>
<dbReference type="InterPro" id="IPR005294">
    <property type="entry name" value="ATP_synth_F1_asu"/>
</dbReference>
<dbReference type="InterPro" id="IPR020003">
    <property type="entry name" value="ATPase_a/bsu_AS"/>
</dbReference>
<dbReference type="InterPro" id="IPR004100">
    <property type="entry name" value="ATPase_F1/V1/A1_a/bsu_N"/>
</dbReference>
<dbReference type="InterPro" id="IPR036121">
    <property type="entry name" value="ATPase_F1/V1/A1_a/bsu_N_sf"/>
</dbReference>
<dbReference type="InterPro" id="IPR000194">
    <property type="entry name" value="ATPase_F1/V1/A1_a/bsu_nucl-bd"/>
</dbReference>
<dbReference type="InterPro" id="IPR027417">
    <property type="entry name" value="P-loop_NTPase"/>
</dbReference>
<dbReference type="NCBIfam" id="TIGR00962">
    <property type="entry name" value="atpA"/>
    <property type="match status" value="1"/>
</dbReference>
<dbReference type="NCBIfam" id="NF009884">
    <property type="entry name" value="PRK13343.1"/>
    <property type="match status" value="1"/>
</dbReference>
<dbReference type="PANTHER" id="PTHR48082">
    <property type="entry name" value="ATP SYNTHASE SUBUNIT ALPHA, MITOCHONDRIAL"/>
    <property type="match status" value="1"/>
</dbReference>
<dbReference type="PANTHER" id="PTHR48082:SF2">
    <property type="entry name" value="ATP SYNTHASE SUBUNIT ALPHA, MITOCHONDRIAL"/>
    <property type="match status" value="1"/>
</dbReference>
<dbReference type="Pfam" id="PF00006">
    <property type="entry name" value="ATP-synt_ab"/>
    <property type="match status" value="1"/>
</dbReference>
<dbReference type="Pfam" id="PF00306">
    <property type="entry name" value="ATP-synt_ab_C"/>
    <property type="match status" value="1"/>
</dbReference>
<dbReference type="Pfam" id="PF02874">
    <property type="entry name" value="ATP-synt_ab_N"/>
    <property type="match status" value="1"/>
</dbReference>
<dbReference type="PIRSF" id="PIRSF039088">
    <property type="entry name" value="F_ATPase_subunit_alpha"/>
    <property type="match status" value="1"/>
</dbReference>
<dbReference type="SUPFAM" id="SSF47917">
    <property type="entry name" value="C-terminal domain of alpha and beta subunits of F1 ATP synthase"/>
    <property type="match status" value="1"/>
</dbReference>
<dbReference type="SUPFAM" id="SSF50615">
    <property type="entry name" value="N-terminal domain of alpha and beta subunits of F1 ATP synthase"/>
    <property type="match status" value="1"/>
</dbReference>
<dbReference type="SUPFAM" id="SSF52540">
    <property type="entry name" value="P-loop containing nucleoside triphosphate hydrolases"/>
    <property type="match status" value="1"/>
</dbReference>
<dbReference type="PROSITE" id="PS00152">
    <property type="entry name" value="ATPASE_ALPHA_BETA"/>
    <property type="match status" value="1"/>
</dbReference>
<comment type="function">
    <text evidence="1">Produces ATP from ADP in the presence of a proton gradient across the membrane. The alpha chain is a regulatory subunit.</text>
</comment>
<comment type="catalytic activity">
    <reaction evidence="1">
        <text>ATP + H2O + 4 H(+)(in) = ADP + phosphate + 5 H(+)(out)</text>
        <dbReference type="Rhea" id="RHEA:57720"/>
        <dbReference type="ChEBI" id="CHEBI:15377"/>
        <dbReference type="ChEBI" id="CHEBI:15378"/>
        <dbReference type="ChEBI" id="CHEBI:30616"/>
        <dbReference type="ChEBI" id="CHEBI:43474"/>
        <dbReference type="ChEBI" id="CHEBI:456216"/>
        <dbReference type="EC" id="7.1.2.2"/>
    </reaction>
</comment>
<comment type="subunit">
    <text evidence="1">F-type ATPases have 2 components, CF(1) - the catalytic core - and CF(0) - the membrane proton channel. CF(1) has five subunits: alpha(3), beta(3), gamma(1), delta(1), epsilon(1). CF(0) has three main subunits: a(1), b(2) and c(9-12). The alpha and beta chains form an alternating ring which encloses part of the gamma chain. CF(1) is attached to CF(0) by a central stalk formed by the gamma and epsilon chains, while a peripheral stalk is formed by the delta and b chains.</text>
</comment>
<comment type="subcellular location">
    <subcellularLocation>
        <location evidence="1">Cell inner membrane</location>
        <topology evidence="1">Peripheral membrane protein</topology>
    </subcellularLocation>
</comment>
<comment type="similarity">
    <text evidence="1">Belongs to the ATPase alpha/beta chains family.</text>
</comment>
<name>ATPA_NEIMA</name>
<keyword id="KW-0066">ATP synthesis</keyword>
<keyword id="KW-0067">ATP-binding</keyword>
<keyword id="KW-0997">Cell inner membrane</keyword>
<keyword id="KW-1003">Cell membrane</keyword>
<keyword id="KW-0139">CF(1)</keyword>
<keyword id="KW-0375">Hydrogen ion transport</keyword>
<keyword id="KW-0406">Ion transport</keyword>
<keyword id="KW-0472">Membrane</keyword>
<keyword id="KW-0547">Nucleotide-binding</keyword>
<keyword id="KW-1278">Translocase</keyword>
<keyword id="KW-0813">Transport</keyword>
<gene>
    <name evidence="1" type="primary">atpA</name>
    <name type="ordered locus">NMA0517</name>
</gene>
<organism>
    <name type="scientific">Neisseria meningitidis serogroup A / serotype 4A (strain DSM 15465 / Z2491)</name>
    <dbReference type="NCBI Taxonomy" id="122587"/>
    <lineage>
        <taxon>Bacteria</taxon>
        <taxon>Pseudomonadati</taxon>
        <taxon>Pseudomonadota</taxon>
        <taxon>Betaproteobacteria</taxon>
        <taxon>Neisseriales</taxon>
        <taxon>Neisseriaceae</taxon>
        <taxon>Neisseria</taxon>
    </lineage>
</organism>
<protein>
    <recommendedName>
        <fullName evidence="1">ATP synthase subunit alpha</fullName>
        <ecNumber evidence="1">7.1.2.2</ecNumber>
    </recommendedName>
    <alternativeName>
        <fullName evidence="1">ATP synthase F1 sector subunit alpha</fullName>
    </alternativeName>
    <alternativeName>
        <fullName evidence="1">F-ATPase subunit alpha</fullName>
    </alternativeName>
</protein>
<reference key="1">
    <citation type="journal article" date="2000" name="Nature">
        <title>Complete DNA sequence of a serogroup A strain of Neisseria meningitidis Z2491.</title>
        <authorList>
            <person name="Parkhill J."/>
            <person name="Achtman M."/>
            <person name="James K.D."/>
            <person name="Bentley S.D."/>
            <person name="Churcher C.M."/>
            <person name="Klee S.R."/>
            <person name="Morelli G."/>
            <person name="Basham D."/>
            <person name="Brown D."/>
            <person name="Chillingworth T."/>
            <person name="Davies R.M."/>
            <person name="Davis P."/>
            <person name="Devlin K."/>
            <person name="Feltwell T."/>
            <person name="Hamlin N."/>
            <person name="Holroyd S."/>
            <person name="Jagels K."/>
            <person name="Leather S."/>
            <person name="Moule S."/>
            <person name="Mungall K.L."/>
            <person name="Quail M.A."/>
            <person name="Rajandream M.A."/>
            <person name="Rutherford K.M."/>
            <person name="Simmonds M."/>
            <person name="Skelton J."/>
            <person name="Whitehead S."/>
            <person name="Spratt B.G."/>
            <person name="Barrell B.G."/>
        </authorList>
    </citation>
    <scope>NUCLEOTIDE SEQUENCE [LARGE SCALE GENOMIC DNA]</scope>
    <source>
        <strain>DSM 15465 / Z2491</strain>
    </source>
</reference>
<proteinExistence type="inferred from homology"/>